<sequence>MRLYRDRAVVLRQHKLGEADRIVTLLTRDHGLVRAVAKGVRRTRSKFGSRLEPFAHIDAQLHPGRNLDIVTQVVSIDAFAADIVNDYGRYTCGCAMLETAERLAGEERAPAPALHRLTVGALRAVADGSRPRDLLLDAYLLRAMGIAGWAPALTECARCATPGPHRAFHIAAGGSVCPHCRPAGSTTPPLGVLDLMSALHDGDWEAAQGAPQSHRSYVSGLVAAHLQWHLERQLKTLPLVERFYQADRSVAERRAALIGQDSECG</sequence>
<protein>
    <recommendedName>
        <fullName evidence="1">DNA repair protein RecO</fullName>
    </recommendedName>
    <alternativeName>
        <fullName evidence="1">Recombination protein O</fullName>
    </alternativeName>
</protein>
<evidence type="ECO:0000255" key="1">
    <source>
        <dbReference type="HAMAP-Rule" id="MF_00201"/>
    </source>
</evidence>
<reference key="1">
    <citation type="journal article" date="2008" name="Genome Res.">
        <title>Insights from the complete genome sequence of Mycobacterium marinum on the evolution of Mycobacterium tuberculosis.</title>
        <authorList>
            <person name="Stinear T.P."/>
            <person name="Seemann T."/>
            <person name="Harrison P.F."/>
            <person name="Jenkin G.A."/>
            <person name="Davies J.K."/>
            <person name="Johnson P.D."/>
            <person name="Abdellah Z."/>
            <person name="Arrowsmith C."/>
            <person name="Chillingworth T."/>
            <person name="Churcher C."/>
            <person name="Clarke K."/>
            <person name="Cronin A."/>
            <person name="Davis P."/>
            <person name="Goodhead I."/>
            <person name="Holroyd N."/>
            <person name="Jagels K."/>
            <person name="Lord A."/>
            <person name="Moule S."/>
            <person name="Mungall K."/>
            <person name="Norbertczak H."/>
            <person name="Quail M.A."/>
            <person name="Rabbinowitsch E."/>
            <person name="Walker D."/>
            <person name="White B."/>
            <person name="Whitehead S."/>
            <person name="Small P.L."/>
            <person name="Brosch R."/>
            <person name="Ramakrishnan L."/>
            <person name="Fischbach M.A."/>
            <person name="Parkhill J."/>
            <person name="Cole S.T."/>
        </authorList>
    </citation>
    <scope>NUCLEOTIDE SEQUENCE [LARGE SCALE GENOMIC DNA]</scope>
    <source>
        <strain>ATCC BAA-535 / M</strain>
    </source>
</reference>
<accession>B2HLB2</accession>
<organism>
    <name type="scientific">Mycobacterium marinum (strain ATCC BAA-535 / M)</name>
    <dbReference type="NCBI Taxonomy" id="216594"/>
    <lineage>
        <taxon>Bacteria</taxon>
        <taxon>Bacillati</taxon>
        <taxon>Actinomycetota</taxon>
        <taxon>Actinomycetes</taxon>
        <taxon>Mycobacteriales</taxon>
        <taxon>Mycobacteriaceae</taxon>
        <taxon>Mycobacterium</taxon>
        <taxon>Mycobacterium ulcerans group</taxon>
    </lineage>
</organism>
<feature type="chain" id="PRO_1000099392" description="DNA repair protein RecO">
    <location>
        <begin position="1"/>
        <end position="265"/>
    </location>
</feature>
<gene>
    <name evidence="1" type="primary">recO</name>
    <name type="ordered locus">MMAR_3672</name>
</gene>
<keyword id="KW-0227">DNA damage</keyword>
<keyword id="KW-0233">DNA recombination</keyword>
<keyword id="KW-0234">DNA repair</keyword>
<keyword id="KW-1185">Reference proteome</keyword>
<proteinExistence type="inferred from homology"/>
<name>RECO_MYCMM</name>
<comment type="function">
    <text evidence="1">Involved in DNA repair and RecF pathway recombination.</text>
</comment>
<comment type="similarity">
    <text evidence="1">Belongs to the RecO family.</text>
</comment>
<dbReference type="EMBL" id="CP000854">
    <property type="protein sequence ID" value="ACC42088.1"/>
    <property type="molecule type" value="Genomic_DNA"/>
</dbReference>
<dbReference type="RefSeq" id="WP_012395289.1">
    <property type="nucleotide sequence ID" value="NC_010612.1"/>
</dbReference>
<dbReference type="SMR" id="B2HLB2"/>
<dbReference type="STRING" id="216594.MMAR_3672"/>
<dbReference type="KEGG" id="mmi:MMAR_3672"/>
<dbReference type="eggNOG" id="COG1381">
    <property type="taxonomic scope" value="Bacteria"/>
</dbReference>
<dbReference type="HOGENOM" id="CLU_066632_1_1_11"/>
<dbReference type="OrthoDB" id="9812244at2"/>
<dbReference type="Proteomes" id="UP000001190">
    <property type="component" value="Chromosome"/>
</dbReference>
<dbReference type="GO" id="GO:0043590">
    <property type="term" value="C:bacterial nucleoid"/>
    <property type="evidence" value="ECO:0007669"/>
    <property type="project" value="TreeGrafter"/>
</dbReference>
<dbReference type="GO" id="GO:0006310">
    <property type="term" value="P:DNA recombination"/>
    <property type="evidence" value="ECO:0007669"/>
    <property type="project" value="UniProtKB-UniRule"/>
</dbReference>
<dbReference type="GO" id="GO:0006302">
    <property type="term" value="P:double-strand break repair"/>
    <property type="evidence" value="ECO:0007669"/>
    <property type="project" value="TreeGrafter"/>
</dbReference>
<dbReference type="FunFam" id="1.20.1440.120:FF:000002">
    <property type="entry name" value="DNA repair protein RecO"/>
    <property type="match status" value="1"/>
</dbReference>
<dbReference type="FunFam" id="2.40.50.140:FF:000176">
    <property type="entry name" value="DNA repair protein RecO"/>
    <property type="match status" value="1"/>
</dbReference>
<dbReference type="Gene3D" id="2.40.50.140">
    <property type="entry name" value="Nucleic acid-binding proteins"/>
    <property type="match status" value="1"/>
</dbReference>
<dbReference type="Gene3D" id="1.20.1440.120">
    <property type="entry name" value="Recombination protein O, C-terminal domain"/>
    <property type="match status" value="1"/>
</dbReference>
<dbReference type="HAMAP" id="MF_00201">
    <property type="entry name" value="RecO"/>
    <property type="match status" value="1"/>
</dbReference>
<dbReference type="InterPro" id="IPR037278">
    <property type="entry name" value="ARFGAP/RecO"/>
</dbReference>
<dbReference type="InterPro" id="IPR022572">
    <property type="entry name" value="DNA_rep/recomb_RecO_N"/>
</dbReference>
<dbReference type="InterPro" id="IPR012340">
    <property type="entry name" value="NA-bd_OB-fold"/>
</dbReference>
<dbReference type="InterPro" id="IPR003717">
    <property type="entry name" value="RecO"/>
</dbReference>
<dbReference type="InterPro" id="IPR042242">
    <property type="entry name" value="RecO_C"/>
</dbReference>
<dbReference type="NCBIfam" id="TIGR00613">
    <property type="entry name" value="reco"/>
    <property type="match status" value="1"/>
</dbReference>
<dbReference type="PANTHER" id="PTHR33991">
    <property type="entry name" value="DNA REPAIR PROTEIN RECO"/>
    <property type="match status" value="1"/>
</dbReference>
<dbReference type="PANTHER" id="PTHR33991:SF1">
    <property type="entry name" value="DNA REPAIR PROTEIN RECO"/>
    <property type="match status" value="1"/>
</dbReference>
<dbReference type="Pfam" id="PF02565">
    <property type="entry name" value="RecO_C"/>
    <property type="match status" value="1"/>
</dbReference>
<dbReference type="Pfam" id="PF11967">
    <property type="entry name" value="RecO_N"/>
    <property type="match status" value="1"/>
</dbReference>
<dbReference type="SUPFAM" id="SSF57863">
    <property type="entry name" value="ArfGap/RecO-like zinc finger"/>
    <property type="match status" value="1"/>
</dbReference>
<dbReference type="SUPFAM" id="SSF50249">
    <property type="entry name" value="Nucleic acid-binding proteins"/>
    <property type="match status" value="1"/>
</dbReference>